<gene>
    <name evidence="1" type="primary">lamB</name>
    <name type="ordered locus">ECIAI39_4457</name>
</gene>
<feature type="signal peptide" evidence="1">
    <location>
        <begin position="1"/>
        <end position="25"/>
    </location>
</feature>
<feature type="chain" id="PRO_1000140482" description="Maltoporin">
    <location>
        <begin position="26"/>
        <end position="446"/>
    </location>
</feature>
<feature type="site" description="Greasy slide, important in sugar transport" evidence="1">
    <location>
        <position position="31"/>
    </location>
</feature>
<feature type="site" description="Greasy slide, important in sugar transport" evidence="1">
    <location>
        <position position="66"/>
    </location>
</feature>
<feature type="site" description="Greasy slide, important in sugar transport" evidence="1">
    <location>
        <position position="99"/>
    </location>
</feature>
<feature type="site" description="Important in sugar transport" evidence="1">
    <location>
        <position position="143"/>
    </location>
</feature>
<feature type="site" description="Greasy slide, important in sugar transport" evidence="1">
    <location>
        <position position="252"/>
    </location>
</feature>
<feature type="site" description="Greasy slide, important in sugar transport" evidence="1">
    <location>
        <position position="383"/>
    </location>
</feature>
<feature type="site" description="Greasy slide, important in sugar transport" evidence="1">
    <location>
        <position position="445"/>
    </location>
</feature>
<reference key="1">
    <citation type="journal article" date="2009" name="PLoS Genet.">
        <title>Organised genome dynamics in the Escherichia coli species results in highly diverse adaptive paths.</title>
        <authorList>
            <person name="Touchon M."/>
            <person name="Hoede C."/>
            <person name="Tenaillon O."/>
            <person name="Barbe V."/>
            <person name="Baeriswyl S."/>
            <person name="Bidet P."/>
            <person name="Bingen E."/>
            <person name="Bonacorsi S."/>
            <person name="Bouchier C."/>
            <person name="Bouvet O."/>
            <person name="Calteau A."/>
            <person name="Chiapello H."/>
            <person name="Clermont O."/>
            <person name="Cruveiller S."/>
            <person name="Danchin A."/>
            <person name="Diard M."/>
            <person name="Dossat C."/>
            <person name="Karoui M.E."/>
            <person name="Frapy E."/>
            <person name="Garry L."/>
            <person name="Ghigo J.M."/>
            <person name="Gilles A.M."/>
            <person name="Johnson J."/>
            <person name="Le Bouguenec C."/>
            <person name="Lescat M."/>
            <person name="Mangenot S."/>
            <person name="Martinez-Jehanne V."/>
            <person name="Matic I."/>
            <person name="Nassif X."/>
            <person name="Oztas S."/>
            <person name="Petit M.A."/>
            <person name="Pichon C."/>
            <person name="Rouy Z."/>
            <person name="Ruf C.S."/>
            <person name="Schneider D."/>
            <person name="Tourret J."/>
            <person name="Vacherie B."/>
            <person name="Vallenet D."/>
            <person name="Medigue C."/>
            <person name="Rocha E.P.C."/>
            <person name="Denamur E."/>
        </authorList>
    </citation>
    <scope>NUCLEOTIDE SEQUENCE [LARGE SCALE GENOMIC DNA]</scope>
    <source>
        <strain>IAI39 / ExPEC</strain>
    </source>
</reference>
<protein>
    <recommendedName>
        <fullName evidence="1">Maltoporin</fullName>
    </recommendedName>
    <alternativeName>
        <fullName evidence="1">Maltose-inducible porin</fullName>
    </alternativeName>
</protein>
<accession>B7NS00</accession>
<keyword id="KW-0998">Cell outer membrane</keyword>
<keyword id="KW-0406">Ion transport</keyword>
<keyword id="KW-0472">Membrane</keyword>
<keyword id="KW-0626">Porin</keyword>
<keyword id="KW-0732">Signal</keyword>
<keyword id="KW-0762">Sugar transport</keyword>
<keyword id="KW-0812">Transmembrane</keyword>
<keyword id="KW-1134">Transmembrane beta strand</keyword>
<keyword id="KW-0813">Transport</keyword>
<sequence length="446" mass="49928">MMITLRKLPLAVAVAAGVMSAQAMAVDFHGYARSGIGWTGSGGEQQCFQTTGAQSKYRLGNECETYAELKLGQEVWKEGDKSFYFDTNVAYSVAQQNDWEATDPAFREANVQGKNLIEWLPGSTIWAGKRFYQRHDVHMIDFYYWDISGPGAGLENIDVGFGKLSLAATRSSEAGGSSSFASNNIYDYTNETANDVFDVRLAQMEINPGGTLELGVDYGRANLRDNYRLVDGASKDGWLFTAEHTQSVLKGFNKFVVQYATDSMTSQGKGLSQGSGVAFDNEKFAYNINNNGHMLRILDHGAISMGDNWDMMYVGMYQDINWDNDNGTKWWTVGIRPMYKWTPIMSTVMEIGYDNVESQRTGDKNNQYKITLAQQWQAGDSIWSRPAIRVFATYAKWDEKWGYDYTGNANTNTNFGKAVPADFNGGSFGRGDSDEWTFGAQMEIWW</sequence>
<evidence type="ECO:0000255" key="1">
    <source>
        <dbReference type="HAMAP-Rule" id="MF_01301"/>
    </source>
</evidence>
<name>LAMB_ECO7I</name>
<proteinExistence type="inferred from homology"/>
<dbReference type="EMBL" id="CU928164">
    <property type="protein sequence ID" value="CAR20563.1"/>
    <property type="molecule type" value="Genomic_DNA"/>
</dbReference>
<dbReference type="RefSeq" id="WP_000973665.1">
    <property type="nucleotide sequence ID" value="NC_011750.1"/>
</dbReference>
<dbReference type="RefSeq" id="YP_002410330.1">
    <property type="nucleotide sequence ID" value="NC_011750.1"/>
</dbReference>
<dbReference type="SMR" id="B7NS00"/>
<dbReference type="STRING" id="585057.ECIAI39_4457"/>
<dbReference type="KEGG" id="ect:ECIAI39_4457"/>
<dbReference type="PATRIC" id="fig|585057.6.peg.4603"/>
<dbReference type="HOGENOM" id="CLU_032473_4_1_6"/>
<dbReference type="Proteomes" id="UP000000749">
    <property type="component" value="Chromosome"/>
</dbReference>
<dbReference type="GO" id="GO:0009279">
    <property type="term" value="C:cell outer membrane"/>
    <property type="evidence" value="ECO:0007669"/>
    <property type="project" value="UniProtKB-SubCell"/>
</dbReference>
<dbReference type="GO" id="GO:0046930">
    <property type="term" value="C:pore complex"/>
    <property type="evidence" value="ECO:0007669"/>
    <property type="project" value="UniProtKB-KW"/>
</dbReference>
<dbReference type="GO" id="GO:0042958">
    <property type="term" value="F:maltodextrin transmembrane transporter activity"/>
    <property type="evidence" value="ECO:0007669"/>
    <property type="project" value="InterPro"/>
</dbReference>
<dbReference type="GO" id="GO:0015481">
    <property type="term" value="F:maltose transporting porin activity"/>
    <property type="evidence" value="ECO:0007669"/>
    <property type="project" value="InterPro"/>
</dbReference>
<dbReference type="GO" id="GO:0006811">
    <property type="term" value="P:monoatomic ion transport"/>
    <property type="evidence" value="ECO:0007669"/>
    <property type="project" value="UniProtKB-KW"/>
</dbReference>
<dbReference type="CDD" id="cd01346">
    <property type="entry name" value="Maltoporin-like"/>
    <property type="match status" value="1"/>
</dbReference>
<dbReference type="FunFam" id="2.40.170.10:FF:000001">
    <property type="entry name" value="Maltoporin"/>
    <property type="match status" value="1"/>
</dbReference>
<dbReference type="Gene3D" id="2.40.170.10">
    <property type="entry name" value="Porin, LamB type"/>
    <property type="match status" value="1"/>
</dbReference>
<dbReference type="HAMAP" id="MF_01301">
    <property type="entry name" value="LamB"/>
    <property type="match status" value="1"/>
</dbReference>
<dbReference type="InterPro" id="IPR050286">
    <property type="entry name" value="G_neg_Bact_CarbUptk_Porin"/>
</dbReference>
<dbReference type="InterPro" id="IPR023738">
    <property type="entry name" value="Maltoporin"/>
</dbReference>
<dbReference type="InterPro" id="IPR003192">
    <property type="entry name" value="Porin_LamB"/>
</dbReference>
<dbReference type="InterPro" id="IPR036998">
    <property type="entry name" value="Porin_LamB_sf"/>
</dbReference>
<dbReference type="NCBIfam" id="NF006860">
    <property type="entry name" value="PRK09360.1"/>
    <property type="match status" value="1"/>
</dbReference>
<dbReference type="PANTHER" id="PTHR38762">
    <property type="entry name" value="CRYPTIC OUTER MEMBRANE PORIN BGLH-RELATED"/>
    <property type="match status" value="1"/>
</dbReference>
<dbReference type="PANTHER" id="PTHR38762:SF1">
    <property type="entry name" value="CRYPTIC OUTER MEMBRANE PORIN BGLH-RELATED"/>
    <property type="match status" value="1"/>
</dbReference>
<dbReference type="Pfam" id="PF02264">
    <property type="entry name" value="LamB"/>
    <property type="match status" value="1"/>
</dbReference>
<dbReference type="SUPFAM" id="SSF56935">
    <property type="entry name" value="Porins"/>
    <property type="match status" value="1"/>
</dbReference>
<organism>
    <name type="scientific">Escherichia coli O7:K1 (strain IAI39 / ExPEC)</name>
    <dbReference type="NCBI Taxonomy" id="585057"/>
    <lineage>
        <taxon>Bacteria</taxon>
        <taxon>Pseudomonadati</taxon>
        <taxon>Pseudomonadota</taxon>
        <taxon>Gammaproteobacteria</taxon>
        <taxon>Enterobacterales</taxon>
        <taxon>Enterobacteriaceae</taxon>
        <taxon>Escherichia</taxon>
    </lineage>
</organism>
<comment type="function">
    <text evidence="1">Involved in the transport of maltose and maltodextrins.</text>
</comment>
<comment type="catalytic activity">
    <reaction evidence="1">
        <text>beta-maltose(in) = beta-maltose(out)</text>
        <dbReference type="Rhea" id="RHEA:29731"/>
        <dbReference type="ChEBI" id="CHEBI:18147"/>
    </reaction>
</comment>
<comment type="subunit">
    <text evidence="1">Homotrimer formed of three 18-stranded antiparallel beta-barrels, containing three independent channels.</text>
</comment>
<comment type="subcellular location">
    <subcellularLocation>
        <location evidence="1">Cell outer membrane</location>
        <topology evidence="1">Multi-pass membrane protein</topology>
    </subcellularLocation>
</comment>
<comment type="induction">
    <text evidence="1">By maltose.</text>
</comment>
<comment type="similarity">
    <text evidence="1">Belongs to the porin LamB (TC 1.B.3) family.</text>
</comment>